<name>Y746_WOLPP</name>
<dbReference type="EMBL" id="AM999887">
    <property type="protein sequence ID" value="CAQ54854.1"/>
    <property type="molecule type" value="Genomic_DNA"/>
</dbReference>
<dbReference type="RefSeq" id="WP_007302162.1">
    <property type="nucleotide sequence ID" value="NC_010981.1"/>
</dbReference>
<dbReference type="SMR" id="B3CLT6"/>
<dbReference type="KEGG" id="wpi:WP0746"/>
<dbReference type="eggNOG" id="COG3750">
    <property type="taxonomic scope" value="Bacteria"/>
</dbReference>
<dbReference type="HOGENOM" id="CLU_158651_3_0_5"/>
<dbReference type="Proteomes" id="UP000008814">
    <property type="component" value="Chromosome"/>
</dbReference>
<dbReference type="GO" id="GO:0003677">
    <property type="term" value="F:DNA binding"/>
    <property type="evidence" value="ECO:0007669"/>
    <property type="project" value="InterPro"/>
</dbReference>
<dbReference type="HAMAP" id="MF_00797">
    <property type="entry name" value="UPF0335"/>
    <property type="match status" value="1"/>
</dbReference>
<dbReference type="InterPro" id="IPR018753">
    <property type="entry name" value="GapR-like"/>
</dbReference>
<dbReference type="InterPro" id="IPR046367">
    <property type="entry name" value="GapR-like_DNA-bd"/>
</dbReference>
<dbReference type="NCBIfam" id="NF010247">
    <property type="entry name" value="PRK13694.1"/>
    <property type="match status" value="1"/>
</dbReference>
<dbReference type="Pfam" id="PF10073">
    <property type="entry name" value="GapR_DNA-bd"/>
    <property type="match status" value="1"/>
</dbReference>
<protein>
    <recommendedName>
        <fullName evidence="1">UPF0335 protein WP0746</fullName>
    </recommendedName>
</protein>
<accession>B3CLT6</accession>
<sequence length="85" mass="10262">MEDTLKITAEDLKNYIERIEKLEQEKRDVQDHIRDVYAKAADEGWDIKVMKQIIRLRKMDDDDREEQEILLDTYKRALGMNYEGE</sequence>
<organism>
    <name type="scientific">Wolbachia pipientis subsp. Culex pipiens (strain wPip)</name>
    <dbReference type="NCBI Taxonomy" id="570417"/>
    <lineage>
        <taxon>Bacteria</taxon>
        <taxon>Pseudomonadati</taxon>
        <taxon>Pseudomonadota</taxon>
        <taxon>Alphaproteobacteria</taxon>
        <taxon>Rickettsiales</taxon>
        <taxon>Anaplasmataceae</taxon>
        <taxon>Wolbachieae</taxon>
        <taxon>Wolbachia</taxon>
    </lineage>
</organism>
<evidence type="ECO:0000255" key="1">
    <source>
        <dbReference type="HAMAP-Rule" id="MF_00797"/>
    </source>
</evidence>
<comment type="similarity">
    <text evidence="1">Belongs to the UPF0335 family.</text>
</comment>
<feature type="chain" id="PRO_1000198483" description="UPF0335 protein WP0746">
    <location>
        <begin position="1"/>
        <end position="85"/>
    </location>
</feature>
<proteinExistence type="inferred from homology"/>
<gene>
    <name type="ordered locus">WP0746</name>
</gene>
<reference key="1">
    <citation type="journal article" date="2008" name="Mol. Biol. Evol.">
        <title>Genome evolution of Wolbachia strain wPip from the Culex pipiens group.</title>
        <authorList>
            <person name="Klasson L."/>
            <person name="Walker T."/>
            <person name="Sebaihia M."/>
            <person name="Sanders M.J."/>
            <person name="Quail M.A."/>
            <person name="Lord A."/>
            <person name="Sanders S."/>
            <person name="Earl J."/>
            <person name="O'Neill S.L."/>
            <person name="Thomson N."/>
            <person name="Sinkins S.P."/>
            <person name="Parkhill J."/>
        </authorList>
    </citation>
    <scope>NUCLEOTIDE SEQUENCE [LARGE SCALE GENOMIC DNA]</scope>
    <source>
        <strain>wPip</strain>
    </source>
</reference>